<feature type="chain" id="PRO_1000078164" description="Dihydroorotate dehydrogenase (quinone)">
    <location>
        <begin position="1"/>
        <end position="336"/>
    </location>
</feature>
<feature type="active site" description="Nucleophile" evidence="1">
    <location>
        <position position="175"/>
    </location>
</feature>
<feature type="binding site" evidence="1">
    <location>
        <begin position="62"/>
        <end position="66"/>
    </location>
    <ligand>
        <name>FMN</name>
        <dbReference type="ChEBI" id="CHEBI:58210"/>
    </ligand>
</feature>
<feature type="binding site" evidence="1">
    <location>
        <position position="66"/>
    </location>
    <ligand>
        <name>substrate</name>
    </ligand>
</feature>
<feature type="binding site" evidence="1">
    <location>
        <position position="86"/>
    </location>
    <ligand>
        <name>FMN</name>
        <dbReference type="ChEBI" id="CHEBI:58210"/>
    </ligand>
</feature>
<feature type="binding site" evidence="1">
    <location>
        <begin position="111"/>
        <end position="115"/>
    </location>
    <ligand>
        <name>substrate</name>
    </ligand>
</feature>
<feature type="binding site" evidence="1">
    <location>
        <position position="139"/>
    </location>
    <ligand>
        <name>FMN</name>
        <dbReference type="ChEBI" id="CHEBI:58210"/>
    </ligand>
</feature>
<feature type="binding site" evidence="1">
    <location>
        <position position="172"/>
    </location>
    <ligand>
        <name>FMN</name>
        <dbReference type="ChEBI" id="CHEBI:58210"/>
    </ligand>
</feature>
<feature type="binding site" evidence="1">
    <location>
        <position position="172"/>
    </location>
    <ligand>
        <name>substrate</name>
    </ligand>
</feature>
<feature type="binding site" evidence="1">
    <location>
        <position position="177"/>
    </location>
    <ligand>
        <name>substrate</name>
    </ligand>
</feature>
<feature type="binding site" evidence="1">
    <location>
        <position position="217"/>
    </location>
    <ligand>
        <name>FMN</name>
        <dbReference type="ChEBI" id="CHEBI:58210"/>
    </ligand>
</feature>
<feature type="binding site" evidence="1">
    <location>
        <position position="245"/>
    </location>
    <ligand>
        <name>FMN</name>
        <dbReference type="ChEBI" id="CHEBI:58210"/>
    </ligand>
</feature>
<feature type="binding site" evidence="1">
    <location>
        <begin position="246"/>
        <end position="247"/>
    </location>
    <ligand>
        <name>substrate</name>
    </ligand>
</feature>
<feature type="binding site" evidence="1">
    <location>
        <position position="268"/>
    </location>
    <ligand>
        <name>FMN</name>
        <dbReference type="ChEBI" id="CHEBI:58210"/>
    </ligand>
</feature>
<feature type="binding site" evidence="1">
    <location>
        <position position="297"/>
    </location>
    <ligand>
        <name>FMN</name>
        <dbReference type="ChEBI" id="CHEBI:58210"/>
    </ligand>
</feature>
<feature type="binding site" evidence="1">
    <location>
        <begin position="318"/>
        <end position="319"/>
    </location>
    <ligand>
        <name>FMN</name>
        <dbReference type="ChEBI" id="CHEBI:58210"/>
    </ligand>
</feature>
<comment type="function">
    <text evidence="1">Catalyzes the conversion of dihydroorotate to orotate with quinone as electron acceptor.</text>
</comment>
<comment type="catalytic activity">
    <reaction evidence="1">
        <text>(S)-dihydroorotate + a quinone = orotate + a quinol</text>
        <dbReference type="Rhea" id="RHEA:30187"/>
        <dbReference type="ChEBI" id="CHEBI:24646"/>
        <dbReference type="ChEBI" id="CHEBI:30839"/>
        <dbReference type="ChEBI" id="CHEBI:30864"/>
        <dbReference type="ChEBI" id="CHEBI:132124"/>
        <dbReference type="EC" id="1.3.5.2"/>
    </reaction>
</comment>
<comment type="cofactor">
    <cofactor evidence="1">
        <name>FMN</name>
        <dbReference type="ChEBI" id="CHEBI:58210"/>
    </cofactor>
    <text evidence="1">Binds 1 FMN per subunit.</text>
</comment>
<comment type="pathway">
    <text evidence="1">Pyrimidine metabolism; UMP biosynthesis via de novo pathway; orotate from (S)-dihydroorotate (quinone route): step 1/1.</text>
</comment>
<comment type="subunit">
    <text evidence="1">Monomer.</text>
</comment>
<comment type="subcellular location">
    <subcellularLocation>
        <location evidence="1">Cell membrane</location>
        <topology evidence="1">Peripheral membrane protein</topology>
    </subcellularLocation>
</comment>
<comment type="similarity">
    <text evidence="1">Belongs to the dihydroorotate dehydrogenase family. Type 2 subfamily.</text>
</comment>
<gene>
    <name evidence="1" type="primary">pyrD</name>
    <name type="ordered locus">SARI_01951</name>
</gene>
<keyword id="KW-1003">Cell membrane</keyword>
<keyword id="KW-0285">Flavoprotein</keyword>
<keyword id="KW-0288">FMN</keyword>
<keyword id="KW-0472">Membrane</keyword>
<keyword id="KW-0560">Oxidoreductase</keyword>
<keyword id="KW-0665">Pyrimidine biosynthesis</keyword>
<keyword id="KW-1185">Reference proteome</keyword>
<proteinExistence type="inferred from homology"/>
<evidence type="ECO:0000255" key="1">
    <source>
        <dbReference type="HAMAP-Rule" id="MF_00225"/>
    </source>
</evidence>
<organism>
    <name type="scientific">Salmonella arizonae (strain ATCC BAA-731 / CDC346-86 / RSK2980)</name>
    <dbReference type="NCBI Taxonomy" id="41514"/>
    <lineage>
        <taxon>Bacteria</taxon>
        <taxon>Pseudomonadati</taxon>
        <taxon>Pseudomonadota</taxon>
        <taxon>Gammaproteobacteria</taxon>
        <taxon>Enterobacterales</taxon>
        <taxon>Enterobacteriaceae</taxon>
        <taxon>Salmonella</taxon>
    </lineage>
</organism>
<protein>
    <recommendedName>
        <fullName evidence="1">Dihydroorotate dehydrogenase (quinone)</fullName>
        <ecNumber evidence="1">1.3.5.2</ecNumber>
    </recommendedName>
    <alternativeName>
        <fullName evidence="1">DHOdehase</fullName>
        <shortName evidence="1">DHOD</shortName>
        <shortName evidence="1">DHODase</shortName>
    </alternativeName>
    <alternativeName>
        <fullName evidence="1">Dihydroorotate oxidase</fullName>
    </alternativeName>
</protein>
<accession>A9MHU3</accession>
<sequence>MYYPFVRKALFQLDPERAHEFTFQQLRRITGTPLEALVRQKVPTKPVTCMGLTFKNPLGLAAGLDKDGECIDALGAMGFGSLEIGTVTPRPQPGNDKPRLFRLVDAEGLINRMGFNNLGVDNLVENVKKAHFDGILGINIGKNKDTPVENGKDDYLICMEKVYAYAGYIAINISSPNTPGLRTLQYGDALDDLLIAIKNKQNDLQAIHHKYVPVAVKIAPDLCEEELIQVADSLLRHNIDGVIATNTTLDRSLVQGMKNCQQTGGLSGRPLQLKSTEIIRRLSQELNGQLPIIGVGGIDSVIAAREKIAAGATLVQIYSGFIFKGPPLIKEIVTHI</sequence>
<reference key="1">
    <citation type="submission" date="2007-11" db="EMBL/GenBank/DDBJ databases">
        <authorList>
            <consortium name="The Salmonella enterica serovar Arizonae Genome Sequencing Project"/>
            <person name="McClelland M."/>
            <person name="Sanderson E.K."/>
            <person name="Porwollik S."/>
            <person name="Spieth J."/>
            <person name="Clifton W.S."/>
            <person name="Fulton R."/>
            <person name="Chunyan W."/>
            <person name="Wollam A."/>
            <person name="Shah N."/>
            <person name="Pepin K."/>
            <person name="Bhonagiri V."/>
            <person name="Nash W."/>
            <person name="Johnson M."/>
            <person name="Thiruvilangam P."/>
            <person name="Wilson R."/>
        </authorList>
    </citation>
    <scope>NUCLEOTIDE SEQUENCE [LARGE SCALE GENOMIC DNA]</scope>
    <source>
        <strain>ATCC BAA-731 / CDC346-86 / RSK2980</strain>
    </source>
</reference>
<dbReference type="EC" id="1.3.5.2" evidence="1"/>
<dbReference type="EMBL" id="CP000880">
    <property type="protein sequence ID" value="ABX21833.1"/>
    <property type="molecule type" value="Genomic_DNA"/>
</dbReference>
<dbReference type="SMR" id="A9MHU3"/>
<dbReference type="STRING" id="41514.SARI_01951"/>
<dbReference type="KEGG" id="ses:SARI_01951"/>
<dbReference type="HOGENOM" id="CLU_013640_2_0_6"/>
<dbReference type="UniPathway" id="UPA00070">
    <property type="reaction ID" value="UER00946"/>
</dbReference>
<dbReference type="Proteomes" id="UP000002084">
    <property type="component" value="Chromosome"/>
</dbReference>
<dbReference type="GO" id="GO:0005737">
    <property type="term" value="C:cytoplasm"/>
    <property type="evidence" value="ECO:0007669"/>
    <property type="project" value="InterPro"/>
</dbReference>
<dbReference type="GO" id="GO:0005886">
    <property type="term" value="C:plasma membrane"/>
    <property type="evidence" value="ECO:0007669"/>
    <property type="project" value="UniProtKB-SubCell"/>
</dbReference>
<dbReference type="GO" id="GO:0106430">
    <property type="term" value="F:dihydroorotate dehydrogenase (quinone) activity"/>
    <property type="evidence" value="ECO:0007669"/>
    <property type="project" value="UniProtKB-EC"/>
</dbReference>
<dbReference type="GO" id="GO:0006207">
    <property type="term" value="P:'de novo' pyrimidine nucleobase biosynthetic process"/>
    <property type="evidence" value="ECO:0007669"/>
    <property type="project" value="InterPro"/>
</dbReference>
<dbReference type="GO" id="GO:0044205">
    <property type="term" value="P:'de novo' UMP biosynthetic process"/>
    <property type="evidence" value="ECO:0007669"/>
    <property type="project" value="UniProtKB-UniRule"/>
</dbReference>
<dbReference type="CDD" id="cd04738">
    <property type="entry name" value="DHOD_2_like"/>
    <property type="match status" value="1"/>
</dbReference>
<dbReference type="FunFam" id="3.20.20.70:FF:000028">
    <property type="entry name" value="Dihydroorotate dehydrogenase (quinone)"/>
    <property type="match status" value="1"/>
</dbReference>
<dbReference type="Gene3D" id="3.20.20.70">
    <property type="entry name" value="Aldolase class I"/>
    <property type="match status" value="1"/>
</dbReference>
<dbReference type="HAMAP" id="MF_00225">
    <property type="entry name" value="DHO_dh_type2"/>
    <property type="match status" value="1"/>
</dbReference>
<dbReference type="InterPro" id="IPR013785">
    <property type="entry name" value="Aldolase_TIM"/>
</dbReference>
<dbReference type="InterPro" id="IPR050074">
    <property type="entry name" value="DHO_dehydrogenase"/>
</dbReference>
<dbReference type="InterPro" id="IPR012135">
    <property type="entry name" value="Dihydroorotate_DH_1_2"/>
</dbReference>
<dbReference type="InterPro" id="IPR005719">
    <property type="entry name" value="Dihydroorotate_DH_2"/>
</dbReference>
<dbReference type="InterPro" id="IPR005720">
    <property type="entry name" value="Dihydroorotate_DH_cat"/>
</dbReference>
<dbReference type="InterPro" id="IPR001295">
    <property type="entry name" value="Dihydroorotate_DH_CS"/>
</dbReference>
<dbReference type="NCBIfam" id="NF003644">
    <property type="entry name" value="PRK05286.1-1"/>
    <property type="match status" value="1"/>
</dbReference>
<dbReference type="NCBIfam" id="NF003645">
    <property type="entry name" value="PRK05286.1-2"/>
    <property type="match status" value="1"/>
</dbReference>
<dbReference type="NCBIfam" id="NF003646">
    <property type="entry name" value="PRK05286.1-4"/>
    <property type="match status" value="1"/>
</dbReference>
<dbReference type="NCBIfam" id="NF003652">
    <property type="entry name" value="PRK05286.2-5"/>
    <property type="match status" value="1"/>
</dbReference>
<dbReference type="NCBIfam" id="TIGR01036">
    <property type="entry name" value="pyrD_sub2"/>
    <property type="match status" value="1"/>
</dbReference>
<dbReference type="PANTHER" id="PTHR48109:SF4">
    <property type="entry name" value="DIHYDROOROTATE DEHYDROGENASE (QUINONE), MITOCHONDRIAL"/>
    <property type="match status" value="1"/>
</dbReference>
<dbReference type="PANTHER" id="PTHR48109">
    <property type="entry name" value="DIHYDROOROTATE DEHYDROGENASE (QUINONE), MITOCHONDRIAL-RELATED"/>
    <property type="match status" value="1"/>
</dbReference>
<dbReference type="Pfam" id="PF01180">
    <property type="entry name" value="DHO_dh"/>
    <property type="match status" value="1"/>
</dbReference>
<dbReference type="PIRSF" id="PIRSF000164">
    <property type="entry name" value="DHO_oxidase"/>
    <property type="match status" value="1"/>
</dbReference>
<dbReference type="SUPFAM" id="SSF51395">
    <property type="entry name" value="FMN-linked oxidoreductases"/>
    <property type="match status" value="1"/>
</dbReference>
<dbReference type="PROSITE" id="PS00911">
    <property type="entry name" value="DHODEHASE_1"/>
    <property type="match status" value="1"/>
</dbReference>
<dbReference type="PROSITE" id="PS00912">
    <property type="entry name" value="DHODEHASE_2"/>
    <property type="match status" value="1"/>
</dbReference>
<name>PYRD_SALAR</name>